<gene>
    <name evidence="1" type="primary">mutS</name>
    <name type="ordered locus">Plav_3599</name>
</gene>
<protein>
    <recommendedName>
        <fullName evidence="1">DNA mismatch repair protein MutS</fullName>
    </recommendedName>
</protein>
<keyword id="KW-0067">ATP-binding</keyword>
<keyword id="KW-0227">DNA damage</keyword>
<keyword id="KW-0234">DNA repair</keyword>
<keyword id="KW-0238">DNA-binding</keyword>
<keyword id="KW-0547">Nucleotide-binding</keyword>
<keyword id="KW-1185">Reference proteome</keyword>
<name>MUTS_PARL1</name>
<comment type="function">
    <text evidence="1">This protein is involved in the repair of mismatches in DNA. It is possible that it carries out the mismatch recognition step. This protein has a weak ATPase activity.</text>
</comment>
<comment type="similarity">
    <text evidence="1">Belongs to the DNA mismatch repair MutS family.</text>
</comment>
<evidence type="ECO:0000255" key="1">
    <source>
        <dbReference type="HAMAP-Rule" id="MF_00096"/>
    </source>
</evidence>
<sequence>MSEPATSFTPEIPSALPSIPADATPMMAQYLEIKARWPEALLFYRMGDFYELFFEDAVAASAALDIALTKRGKHLGEDIPMCGVPVHSHDAYLQRLIRKGFKVAVCEQVEDPAEAKKRGAKSVVARAVARLVTPGTLTEDTLLDARAHNYLAALSRTGAEAGFGLAWVDVSTGDFAVTSLAPVALGAELARLSPGELLLPETLDEDEDLAALLAQSGAALTRLPAIRFESGQAERRLKSHLGVSALDGFGAFARAELGAMGALLDYVELTQVGRMPALMPPRRVAATDTMAIDAATRANLELVRTLQGETAGSLLATMDRTVTGAGARELASRLAAPLTDPAAVNRRLDAVEWFHDARDMRARLRAGLKSAPDIARALSRLSLGRGGPRDLAAIANGLAAAHGLCAALDGASPSLLPLPEEIARECEAMRGTAASLQSRLAAMLAEELPLLARDGGFIARGASPELDETRALRDDARKLIAGLQAKYAGESGIAALKIRHNNVLGYYIEVPPRHGEKLLAPPFSDSYIHRQTMANAMRFTTAELAGLASRIAEAAGRALEIELALFDELAAATLLEAPSLSRAAEALARLDATAALAELAAERRYVRPRLDASFAFDIRGGRHPVVEAALARTGQAFVPNDTSLSAESGGGKHIWLLTGPNMAGKSTFLRQNALIAIMAQMGSFVPADEAHIGVVDRLFSRVGAADDLARGRSTFMVEMVETAAILNQAGERSLVILDEIGRGTATFDGLSIAWATVEHLHGVNKSRALFATHYHELTALSEKLAHLANATMRVKEWQGDVVFLHEVAPGAADRSYGIQVAKLAGLPAPVIARAQSVLAALEEGGNHEARTKLIDDLPLFSATAKPAPAVKVSAAEEELKNLNPDELSPKQALELLYKLKALAAKDGE</sequence>
<dbReference type="EMBL" id="CP000774">
    <property type="protein sequence ID" value="ABS65197.1"/>
    <property type="molecule type" value="Genomic_DNA"/>
</dbReference>
<dbReference type="SMR" id="A7HZ64"/>
<dbReference type="STRING" id="402881.Plav_3599"/>
<dbReference type="KEGG" id="pla:Plav_3599"/>
<dbReference type="eggNOG" id="COG0249">
    <property type="taxonomic scope" value="Bacteria"/>
</dbReference>
<dbReference type="HOGENOM" id="CLU_002472_4_0_5"/>
<dbReference type="OrthoDB" id="9802448at2"/>
<dbReference type="Proteomes" id="UP000006377">
    <property type="component" value="Chromosome"/>
</dbReference>
<dbReference type="GO" id="GO:0005829">
    <property type="term" value="C:cytosol"/>
    <property type="evidence" value="ECO:0007669"/>
    <property type="project" value="TreeGrafter"/>
</dbReference>
<dbReference type="GO" id="GO:0005524">
    <property type="term" value="F:ATP binding"/>
    <property type="evidence" value="ECO:0007669"/>
    <property type="project" value="UniProtKB-UniRule"/>
</dbReference>
<dbReference type="GO" id="GO:0140664">
    <property type="term" value="F:ATP-dependent DNA damage sensor activity"/>
    <property type="evidence" value="ECO:0007669"/>
    <property type="project" value="InterPro"/>
</dbReference>
<dbReference type="GO" id="GO:0003684">
    <property type="term" value="F:damaged DNA binding"/>
    <property type="evidence" value="ECO:0007669"/>
    <property type="project" value="UniProtKB-UniRule"/>
</dbReference>
<dbReference type="GO" id="GO:0030983">
    <property type="term" value="F:mismatched DNA binding"/>
    <property type="evidence" value="ECO:0007669"/>
    <property type="project" value="InterPro"/>
</dbReference>
<dbReference type="GO" id="GO:0006298">
    <property type="term" value="P:mismatch repair"/>
    <property type="evidence" value="ECO:0007669"/>
    <property type="project" value="UniProtKB-UniRule"/>
</dbReference>
<dbReference type="CDD" id="cd03284">
    <property type="entry name" value="ABC_MutS1"/>
    <property type="match status" value="1"/>
</dbReference>
<dbReference type="FunFam" id="3.40.1170.10:FF:000001">
    <property type="entry name" value="DNA mismatch repair protein MutS"/>
    <property type="match status" value="1"/>
</dbReference>
<dbReference type="FunFam" id="3.40.50.300:FF:000870">
    <property type="entry name" value="MutS protein homolog 4"/>
    <property type="match status" value="1"/>
</dbReference>
<dbReference type="Gene3D" id="1.10.1420.10">
    <property type="match status" value="2"/>
</dbReference>
<dbReference type="Gene3D" id="6.10.140.430">
    <property type="match status" value="1"/>
</dbReference>
<dbReference type="Gene3D" id="3.40.1170.10">
    <property type="entry name" value="DNA repair protein MutS, domain I"/>
    <property type="match status" value="1"/>
</dbReference>
<dbReference type="Gene3D" id="3.30.420.110">
    <property type="entry name" value="MutS, connector domain"/>
    <property type="match status" value="1"/>
</dbReference>
<dbReference type="Gene3D" id="3.40.50.300">
    <property type="entry name" value="P-loop containing nucleotide triphosphate hydrolases"/>
    <property type="match status" value="1"/>
</dbReference>
<dbReference type="HAMAP" id="MF_00096">
    <property type="entry name" value="MutS"/>
    <property type="match status" value="1"/>
</dbReference>
<dbReference type="InterPro" id="IPR005748">
    <property type="entry name" value="DNA_mismatch_repair_MutS"/>
</dbReference>
<dbReference type="InterPro" id="IPR007695">
    <property type="entry name" value="DNA_mismatch_repair_MutS-lik_N"/>
</dbReference>
<dbReference type="InterPro" id="IPR017261">
    <property type="entry name" value="DNA_mismatch_repair_MutS/MSH"/>
</dbReference>
<dbReference type="InterPro" id="IPR000432">
    <property type="entry name" value="DNA_mismatch_repair_MutS_C"/>
</dbReference>
<dbReference type="InterPro" id="IPR007861">
    <property type="entry name" value="DNA_mismatch_repair_MutS_clamp"/>
</dbReference>
<dbReference type="InterPro" id="IPR007696">
    <property type="entry name" value="DNA_mismatch_repair_MutS_core"/>
</dbReference>
<dbReference type="InterPro" id="IPR016151">
    <property type="entry name" value="DNA_mismatch_repair_MutS_N"/>
</dbReference>
<dbReference type="InterPro" id="IPR036187">
    <property type="entry name" value="DNA_mismatch_repair_MutS_sf"/>
</dbReference>
<dbReference type="InterPro" id="IPR007860">
    <property type="entry name" value="DNA_mmatch_repair_MutS_con_dom"/>
</dbReference>
<dbReference type="InterPro" id="IPR045076">
    <property type="entry name" value="MutS"/>
</dbReference>
<dbReference type="InterPro" id="IPR036678">
    <property type="entry name" value="MutS_con_dom_sf"/>
</dbReference>
<dbReference type="InterPro" id="IPR027417">
    <property type="entry name" value="P-loop_NTPase"/>
</dbReference>
<dbReference type="NCBIfam" id="TIGR01070">
    <property type="entry name" value="mutS1"/>
    <property type="match status" value="1"/>
</dbReference>
<dbReference type="NCBIfam" id="NF003810">
    <property type="entry name" value="PRK05399.1"/>
    <property type="match status" value="1"/>
</dbReference>
<dbReference type="PANTHER" id="PTHR11361:SF34">
    <property type="entry name" value="DNA MISMATCH REPAIR PROTEIN MSH1, MITOCHONDRIAL"/>
    <property type="match status" value="1"/>
</dbReference>
<dbReference type="PANTHER" id="PTHR11361">
    <property type="entry name" value="DNA MISMATCH REPAIR PROTEIN MUTS FAMILY MEMBER"/>
    <property type="match status" value="1"/>
</dbReference>
<dbReference type="Pfam" id="PF01624">
    <property type="entry name" value="MutS_I"/>
    <property type="match status" value="1"/>
</dbReference>
<dbReference type="Pfam" id="PF05188">
    <property type="entry name" value="MutS_II"/>
    <property type="match status" value="1"/>
</dbReference>
<dbReference type="Pfam" id="PF05192">
    <property type="entry name" value="MutS_III"/>
    <property type="match status" value="1"/>
</dbReference>
<dbReference type="Pfam" id="PF05190">
    <property type="entry name" value="MutS_IV"/>
    <property type="match status" value="1"/>
</dbReference>
<dbReference type="Pfam" id="PF00488">
    <property type="entry name" value="MutS_V"/>
    <property type="match status" value="1"/>
</dbReference>
<dbReference type="PIRSF" id="PIRSF037677">
    <property type="entry name" value="DNA_mis_repair_Msh6"/>
    <property type="match status" value="1"/>
</dbReference>
<dbReference type="SMART" id="SM00534">
    <property type="entry name" value="MUTSac"/>
    <property type="match status" value="1"/>
</dbReference>
<dbReference type="SMART" id="SM00533">
    <property type="entry name" value="MUTSd"/>
    <property type="match status" value="1"/>
</dbReference>
<dbReference type="SUPFAM" id="SSF55271">
    <property type="entry name" value="DNA repair protein MutS, domain I"/>
    <property type="match status" value="1"/>
</dbReference>
<dbReference type="SUPFAM" id="SSF53150">
    <property type="entry name" value="DNA repair protein MutS, domain II"/>
    <property type="match status" value="1"/>
</dbReference>
<dbReference type="SUPFAM" id="SSF48334">
    <property type="entry name" value="DNA repair protein MutS, domain III"/>
    <property type="match status" value="1"/>
</dbReference>
<dbReference type="SUPFAM" id="SSF52540">
    <property type="entry name" value="P-loop containing nucleoside triphosphate hydrolases"/>
    <property type="match status" value="1"/>
</dbReference>
<dbReference type="PROSITE" id="PS00486">
    <property type="entry name" value="DNA_MISMATCH_REPAIR_2"/>
    <property type="match status" value="1"/>
</dbReference>
<accession>A7HZ64</accession>
<organism>
    <name type="scientific">Parvibaculum lavamentivorans (strain DS-1 / DSM 13023 / NCIMB 13966)</name>
    <dbReference type="NCBI Taxonomy" id="402881"/>
    <lineage>
        <taxon>Bacteria</taxon>
        <taxon>Pseudomonadati</taxon>
        <taxon>Pseudomonadota</taxon>
        <taxon>Alphaproteobacteria</taxon>
        <taxon>Hyphomicrobiales</taxon>
        <taxon>Parvibaculaceae</taxon>
        <taxon>Parvibaculum</taxon>
    </lineage>
</organism>
<feature type="chain" id="PRO_1000075558" description="DNA mismatch repair protein MutS">
    <location>
        <begin position="1"/>
        <end position="908"/>
    </location>
</feature>
<feature type="binding site" evidence="1">
    <location>
        <begin position="659"/>
        <end position="666"/>
    </location>
    <ligand>
        <name>ATP</name>
        <dbReference type="ChEBI" id="CHEBI:30616"/>
    </ligand>
</feature>
<reference key="1">
    <citation type="journal article" date="2011" name="Stand. Genomic Sci.">
        <title>Complete genome sequence of Parvibaculum lavamentivorans type strain (DS-1(T)).</title>
        <authorList>
            <person name="Schleheck D."/>
            <person name="Weiss M."/>
            <person name="Pitluck S."/>
            <person name="Bruce D."/>
            <person name="Land M.L."/>
            <person name="Han S."/>
            <person name="Saunders E."/>
            <person name="Tapia R."/>
            <person name="Detter C."/>
            <person name="Brettin T."/>
            <person name="Han J."/>
            <person name="Woyke T."/>
            <person name="Goodwin L."/>
            <person name="Pennacchio L."/>
            <person name="Nolan M."/>
            <person name="Cook A.M."/>
            <person name="Kjelleberg S."/>
            <person name="Thomas T."/>
        </authorList>
    </citation>
    <scope>NUCLEOTIDE SEQUENCE [LARGE SCALE GENOMIC DNA]</scope>
    <source>
        <strain>DS-1 / DSM 13023 / NCIMB 13966</strain>
    </source>
</reference>
<proteinExistence type="inferred from homology"/>